<comment type="function">
    <text evidence="1">Catalyzes the transfer of a methyl group from 5-methyltetrahydrofolate to homocysteine resulting in methionine formation.</text>
</comment>
<comment type="catalytic activity">
    <reaction evidence="1">
        <text>5-methyltetrahydropteroyltri-L-glutamate + L-homocysteine = tetrahydropteroyltri-L-glutamate + L-methionine</text>
        <dbReference type="Rhea" id="RHEA:21196"/>
        <dbReference type="ChEBI" id="CHEBI:57844"/>
        <dbReference type="ChEBI" id="CHEBI:58140"/>
        <dbReference type="ChEBI" id="CHEBI:58199"/>
        <dbReference type="ChEBI" id="CHEBI:58207"/>
        <dbReference type="EC" id="2.1.1.14"/>
    </reaction>
</comment>
<comment type="cofactor">
    <cofactor evidence="1">
        <name>Zn(2+)</name>
        <dbReference type="ChEBI" id="CHEBI:29105"/>
    </cofactor>
    <text evidence="1">Binds 1 zinc ion per subunit.</text>
</comment>
<comment type="pathway">
    <text evidence="1">Amino-acid biosynthesis; L-methionine biosynthesis via de novo pathway; L-methionine from L-homocysteine (MetE route): step 1/1.</text>
</comment>
<comment type="similarity">
    <text evidence="1">Belongs to the vitamin-B12 independent methionine synthase family.</text>
</comment>
<gene>
    <name evidence="1" type="primary">metE</name>
    <name type="ordered locus">Tpet_1489</name>
</gene>
<organism>
    <name type="scientific">Thermotoga petrophila (strain ATCC BAA-488 / DSM 13995 / JCM 10881 / RKU-1)</name>
    <dbReference type="NCBI Taxonomy" id="390874"/>
    <lineage>
        <taxon>Bacteria</taxon>
        <taxon>Thermotogati</taxon>
        <taxon>Thermotogota</taxon>
        <taxon>Thermotogae</taxon>
        <taxon>Thermotogales</taxon>
        <taxon>Thermotogaceae</taxon>
        <taxon>Thermotoga</taxon>
    </lineage>
</organism>
<feature type="chain" id="PRO_1000017288" description="5-methyltetrahydropteroyltriglutamate--homocysteine methyltransferase">
    <location>
        <begin position="1"/>
        <end position="735"/>
    </location>
</feature>
<feature type="active site" description="Proton donor" evidence="1">
    <location>
        <position position="672"/>
    </location>
</feature>
<feature type="binding site" evidence="1">
    <location>
        <begin position="15"/>
        <end position="18"/>
    </location>
    <ligand>
        <name>5-methyltetrahydropteroyltri-L-glutamate</name>
        <dbReference type="ChEBI" id="CHEBI:58207"/>
    </ligand>
</feature>
<feature type="binding site" evidence="1">
    <location>
        <position position="104"/>
    </location>
    <ligand>
        <name>5-methyltetrahydropteroyltri-L-glutamate</name>
        <dbReference type="ChEBI" id="CHEBI:58207"/>
    </ligand>
</feature>
<feature type="binding site" evidence="1">
    <location>
        <begin position="409"/>
        <end position="411"/>
    </location>
    <ligand>
        <name>L-homocysteine</name>
        <dbReference type="ChEBI" id="CHEBI:58199"/>
    </ligand>
</feature>
<feature type="binding site" evidence="1">
    <location>
        <begin position="409"/>
        <end position="411"/>
    </location>
    <ligand>
        <name>L-methionine</name>
        <dbReference type="ChEBI" id="CHEBI:57844"/>
    </ligand>
</feature>
<feature type="binding site" evidence="1">
    <location>
        <position position="462"/>
    </location>
    <ligand>
        <name>L-homocysteine</name>
        <dbReference type="ChEBI" id="CHEBI:58199"/>
    </ligand>
</feature>
<feature type="binding site" evidence="1">
    <location>
        <position position="462"/>
    </location>
    <ligand>
        <name>L-methionine</name>
        <dbReference type="ChEBI" id="CHEBI:57844"/>
    </ligand>
</feature>
<feature type="binding site" evidence="1">
    <location>
        <begin position="493"/>
        <end position="494"/>
    </location>
    <ligand>
        <name>5-methyltetrahydropteroyltri-L-glutamate</name>
        <dbReference type="ChEBI" id="CHEBI:58207"/>
    </ligand>
</feature>
<feature type="binding site" evidence="1">
    <location>
        <position position="539"/>
    </location>
    <ligand>
        <name>5-methyltetrahydropteroyltri-L-glutamate</name>
        <dbReference type="ChEBI" id="CHEBI:58207"/>
    </ligand>
</feature>
<feature type="binding site" evidence="1">
    <location>
        <position position="577"/>
    </location>
    <ligand>
        <name>L-homocysteine</name>
        <dbReference type="ChEBI" id="CHEBI:58199"/>
    </ligand>
</feature>
<feature type="binding site" evidence="1">
    <location>
        <position position="577"/>
    </location>
    <ligand>
        <name>L-methionine</name>
        <dbReference type="ChEBI" id="CHEBI:57844"/>
    </ligand>
</feature>
<feature type="binding site" evidence="1">
    <location>
        <position position="583"/>
    </location>
    <ligand>
        <name>5-methyltetrahydropteroyltri-L-glutamate</name>
        <dbReference type="ChEBI" id="CHEBI:58207"/>
    </ligand>
</feature>
<feature type="binding site" evidence="1">
    <location>
        <position position="618"/>
    </location>
    <ligand>
        <name>Zn(2+)</name>
        <dbReference type="ChEBI" id="CHEBI:29105"/>
        <note>catalytic</note>
    </ligand>
</feature>
<feature type="binding site" evidence="1">
    <location>
        <position position="620"/>
    </location>
    <ligand>
        <name>Zn(2+)</name>
        <dbReference type="ChEBI" id="CHEBI:29105"/>
        <note>catalytic</note>
    </ligand>
</feature>
<feature type="binding site" evidence="1">
    <location>
        <position position="642"/>
    </location>
    <ligand>
        <name>Zn(2+)</name>
        <dbReference type="ChEBI" id="CHEBI:29105"/>
        <note>catalytic</note>
    </ligand>
</feature>
<feature type="binding site" evidence="1">
    <location>
        <position position="704"/>
    </location>
    <ligand>
        <name>Zn(2+)</name>
        <dbReference type="ChEBI" id="CHEBI:29105"/>
        <note>catalytic</note>
    </ligand>
</feature>
<accession>A5IMS4</accession>
<dbReference type="EC" id="2.1.1.14" evidence="1"/>
<dbReference type="EMBL" id="CP000702">
    <property type="protein sequence ID" value="ABQ47497.1"/>
    <property type="molecule type" value="Genomic_DNA"/>
</dbReference>
<dbReference type="SMR" id="A5IMS4"/>
<dbReference type="STRING" id="390874.Tpet_1489"/>
<dbReference type="KEGG" id="tpt:Tpet_1489"/>
<dbReference type="eggNOG" id="COG0620">
    <property type="taxonomic scope" value="Bacteria"/>
</dbReference>
<dbReference type="HOGENOM" id="CLU_013175_0_0_0"/>
<dbReference type="UniPathway" id="UPA00051">
    <property type="reaction ID" value="UER00082"/>
</dbReference>
<dbReference type="Proteomes" id="UP000006558">
    <property type="component" value="Chromosome"/>
</dbReference>
<dbReference type="GO" id="GO:0003871">
    <property type="term" value="F:5-methyltetrahydropteroyltriglutamate-homocysteine S-methyltransferase activity"/>
    <property type="evidence" value="ECO:0007669"/>
    <property type="project" value="UniProtKB-UniRule"/>
</dbReference>
<dbReference type="GO" id="GO:0008270">
    <property type="term" value="F:zinc ion binding"/>
    <property type="evidence" value="ECO:0007669"/>
    <property type="project" value="InterPro"/>
</dbReference>
<dbReference type="GO" id="GO:0009086">
    <property type="term" value="P:methionine biosynthetic process"/>
    <property type="evidence" value="ECO:0007669"/>
    <property type="project" value="UniProtKB-UniRule"/>
</dbReference>
<dbReference type="GO" id="GO:0032259">
    <property type="term" value="P:methylation"/>
    <property type="evidence" value="ECO:0007669"/>
    <property type="project" value="UniProtKB-KW"/>
</dbReference>
<dbReference type="CDD" id="cd03311">
    <property type="entry name" value="CIMS_C_terminal_like"/>
    <property type="match status" value="1"/>
</dbReference>
<dbReference type="CDD" id="cd03312">
    <property type="entry name" value="CIMS_N_terminal_like"/>
    <property type="match status" value="1"/>
</dbReference>
<dbReference type="Gene3D" id="3.20.20.210">
    <property type="match status" value="2"/>
</dbReference>
<dbReference type="HAMAP" id="MF_00172">
    <property type="entry name" value="Meth_synth"/>
    <property type="match status" value="1"/>
</dbReference>
<dbReference type="InterPro" id="IPR013215">
    <property type="entry name" value="Cbl-indep_Met_Synth_N"/>
</dbReference>
<dbReference type="InterPro" id="IPR006276">
    <property type="entry name" value="Cobalamin-indep_Met_synthase"/>
</dbReference>
<dbReference type="InterPro" id="IPR002629">
    <property type="entry name" value="Met_Synth_C/arc"/>
</dbReference>
<dbReference type="InterPro" id="IPR038071">
    <property type="entry name" value="UROD/MetE-like_sf"/>
</dbReference>
<dbReference type="NCBIfam" id="TIGR01371">
    <property type="entry name" value="met_syn_B12ind"/>
    <property type="match status" value="1"/>
</dbReference>
<dbReference type="NCBIfam" id="NF003556">
    <property type="entry name" value="PRK05222.1"/>
    <property type="match status" value="1"/>
</dbReference>
<dbReference type="PANTHER" id="PTHR30519">
    <property type="entry name" value="5-METHYLTETRAHYDROPTEROYLTRIGLUTAMATE--HOMOCYSTEINE METHYLTRANSFERASE"/>
    <property type="match status" value="1"/>
</dbReference>
<dbReference type="Pfam" id="PF08267">
    <property type="entry name" value="Meth_synt_1"/>
    <property type="match status" value="1"/>
</dbReference>
<dbReference type="Pfam" id="PF01717">
    <property type="entry name" value="Meth_synt_2"/>
    <property type="match status" value="1"/>
</dbReference>
<dbReference type="PIRSF" id="PIRSF000382">
    <property type="entry name" value="MeTrfase_B12_ind"/>
    <property type="match status" value="1"/>
</dbReference>
<dbReference type="SUPFAM" id="SSF51726">
    <property type="entry name" value="UROD/MetE-like"/>
    <property type="match status" value="2"/>
</dbReference>
<keyword id="KW-0028">Amino-acid biosynthesis</keyword>
<keyword id="KW-0479">Metal-binding</keyword>
<keyword id="KW-0486">Methionine biosynthesis</keyword>
<keyword id="KW-0489">Methyltransferase</keyword>
<keyword id="KW-0677">Repeat</keyword>
<keyword id="KW-0808">Transferase</keyword>
<keyword id="KW-0862">Zinc</keyword>
<evidence type="ECO:0000255" key="1">
    <source>
        <dbReference type="HAMAP-Rule" id="MF_00172"/>
    </source>
</evidence>
<proteinExistence type="inferred from homology"/>
<protein>
    <recommendedName>
        <fullName evidence="1">5-methyltetrahydropteroyltriglutamate--homocysteine methyltransferase</fullName>
        <ecNumber evidence="1">2.1.1.14</ecNumber>
    </recommendedName>
    <alternativeName>
        <fullName evidence="1">Cobalamin-independent methionine synthase</fullName>
    </alternativeName>
    <alternativeName>
        <fullName evidence="1">Methionine synthase, vitamin-B12 independent isozyme</fullName>
    </alternativeName>
</protein>
<sequence>MKVYAFGFPKIGEKREFKKALEDFWKGKITENQFKEEMSELRMYMVENYRTNVDVVPSNELSYYDFVLDTAIMVGAIPERFGKYEGLSTYFEMARGRKALEMTKYFNTNYHYLVPEIESGNFELLENIPLEDFLFFRSMGIETAPRILGPFTFLYLSKKDGMWIREPGEMEKLFTRLVPVYRKVFEELVENGCGEILVDEPAFVCDLQKDHWNLIKDVYSEFSGFPLTIFTYYDSVSDYESYVSLPVKGLHLDFVSNTENLRNFEKHGFPSDKTLIAGVINGRQPWRANLKKVAELVDKLGASAISNSCPLFHLPITAQWENSLPDGLREKLAFAKEKLEELKVLKEFFEGKKVNLPEVSFEDFAVDESVSKKIKQLTPDSFRREKEYQERDRIQREELKLPLFPTTTIGSFPQTSDVRKMRARYRRGEISEEEYESFIKEQIKKVVRIQEEIGLDVLVHGEFERTDMVEFFAEKLNGIATTQNGWVLSYGSRCYRPPIIYGTVSRTGPMTLKEITYAQSLTEKPVKGMLTGPITIMGWSYYREDIPEREIAYQIALAINEEVKDLEEAGIKIVQIDEPAFREKAPVKKSKWPEYFEWAINAFNLAANARPETQIHAHMCYSDFNEIIEYIHQLEFDVISIEASRSKGEIISAFENFKGWIKQIGVGVWDIHSPAVPSVDEMKSIIERVLRILPKELIWVNPDCGLKTRNWEEVVPSLKNMVDLAKKLRKEYNNT</sequence>
<name>METE_THEP1</name>
<reference key="1">
    <citation type="submission" date="2007-05" db="EMBL/GenBank/DDBJ databases">
        <title>Complete sequence of Thermotoga petrophila RKU-1.</title>
        <authorList>
            <consortium name="US DOE Joint Genome Institute"/>
            <person name="Copeland A."/>
            <person name="Lucas S."/>
            <person name="Lapidus A."/>
            <person name="Barry K."/>
            <person name="Glavina del Rio T."/>
            <person name="Dalin E."/>
            <person name="Tice H."/>
            <person name="Pitluck S."/>
            <person name="Sims D."/>
            <person name="Brettin T."/>
            <person name="Bruce D."/>
            <person name="Detter J.C."/>
            <person name="Han C."/>
            <person name="Tapia R."/>
            <person name="Schmutz J."/>
            <person name="Larimer F."/>
            <person name="Land M."/>
            <person name="Hauser L."/>
            <person name="Kyrpides N."/>
            <person name="Mikhailova N."/>
            <person name="Nelson K."/>
            <person name="Gogarten J.P."/>
            <person name="Noll K."/>
            <person name="Richardson P."/>
        </authorList>
    </citation>
    <scope>NUCLEOTIDE SEQUENCE [LARGE SCALE GENOMIC DNA]</scope>
    <source>
        <strain>ATCC BAA-488 / DSM 13995 / JCM 10881 / RKU-1</strain>
    </source>
</reference>